<dbReference type="EMBL" id="CP001056">
    <property type="protein sequence ID" value="ACD21972.1"/>
    <property type="molecule type" value="Genomic_DNA"/>
</dbReference>
<dbReference type="SMR" id="B2TML4"/>
<dbReference type="KEGG" id="cbk:CLL_A1008"/>
<dbReference type="PATRIC" id="fig|935198.13.peg.957"/>
<dbReference type="HOGENOM" id="CLU_062974_2_2_9"/>
<dbReference type="Proteomes" id="UP000001195">
    <property type="component" value="Chromosome"/>
</dbReference>
<dbReference type="GO" id="GO:0005829">
    <property type="term" value="C:cytosol"/>
    <property type="evidence" value="ECO:0007669"/>
    <property type="project" value="TreeGrafter"/>
</dbReference>
<dbReference type="GO" id="GO:0003677">
    <property type="term" value="F:DNA binding"/>
    <property type="evidence" value="ECO:0007669"/>
    <property type="project" value="UniProtKB-UniRule"/>
</dbReference>
<dbReference type="GO" id="GO:0006355">
    <property type="term" value="P:regulation of DNA-templated transcription"/>
    <property type="evidence" value="ECO:0007669"/>
    <property type="project" value="UniProtKB-UniRule"/>
</dbReference>
<dbReference type="FunFam" id="1.10.10.200:FF:000002">
    <property type="entry name" value="Probable transcriptional regulatory protein CLM62_37755"/>
    <property type="match status" value="1"/>
</dbReference>
<dbReference type="FunFam" id="3.30.70.980:FF:000002">
    <property type="entry name" value="Probable transcriptional regulatory protein YebC"/>
    <property type="match status" value="1"/>
</dbReference>
<dbReference type="Gene3D" id="1.10.10.200">
    <property type="match status" value="1"/>
</dbReference>
<dbReference type="Gene3D" id="3.30.70.980">
    <property type="match status" value="2"/>
</dbReference>
<dbReference type="HAMAP" id="MF_00693">
    <property type="entry name" value="Transcrip_reg_TACO1"/>
    <property type="match status" value="1"/>
</dbReference>
<dbReference type="InterPro" id="IPR017856">
    <property type="entry name" value="Integrase-like_N"/>
</dbReference>
<dbReference type="InterPro" id="IPR048300">
    <property type="entry name" value="TACO1_YebC-like_2nd/3rd_dom"/>
</dbReference>
<dbReference type="InterPro" id="IPR049083">
    <property type="entry name" value="TACO1_YebC_N"/>
</dbReference>
<dbReference type="InterPro" id="IPR002876">
    <property type="entry name" value="Transcrip_reg_TACO1-like"/>
</dbReference>
<dbReference type="InterPro" id="IPR026564">
    <property type="entry name" value="Transcrip_reg_TACO1-like_dom3"/>
</dbReference>
<dbReference type="InterPro" id="IPR029072">
    <property type="entry name" value="YebC-like"/>
</dbReference>
<dbReference type="NCBIfam" id="NF001030">
    <property type="entry name" value="PRK00110.1"/>
    <property type="match status" value="1"/>
</dbReference>
<dbReference type="NCBIfam" id="NF009044">
    <property type="entry name" value="PRK12378.1"/>
    <property type="match status" value="1"/>
</dbReference>
<dbReference type="NCBIfam" id="TIGR01033">
    <property type="entry name" value="YebC/PmpR family DNA-binding transcriptional regulator"/>
    <property type="match status" value="1"/>
</dbReference>
<dbReference type="PANTHER" id="PTHR12532:SF6">
    <property type="entry name" value="TRANSCRIPTIONAL REGULATORY PROTEIN YEBC-RELATED"/>
    <property type="match status" value="1"/>
</dbReference>
<dbReference type="PANTHER" id="PTHR12532">
    <property type="entry name" value="TRANSLATIONAL ACTIVATOR OF CYTOCHROME C OXIDASE 1"/>
    <property type="match status" value="1"/>
</dbReference>
<dbReference type="Pfam" id="PF20772">
    <property type="entry name" value="TACO1_YebC_N"/>
    <property type="match status" value="1"/>
</dbReference>
<dbReference type="Pfam" id="PF01709">
    <property type="entry name" value="Transcrip_reg"/>
    <property type="match status" value="1"/>
</dbReference>
<dbReference type="SUPFAM" id="SSF75625">
    <property type="entry name" value="YebC-like"/>
    <property type="match status" value="1"/>
</dbReference>
<gene>
    <name type="ordered locus">CLL_A1008</name>
</gene>
<reference key="1">
    <citation type="submission" date="2008-04" db="EMBL/GenBank/DDBJ databases">
        <title>Complete sequence of Clostridium botulinum strain Eklund.</title>
        <authorList>
            <person name="Brinkac L.M."/>
            <person name="Brown J.L."/>
            <person name="Bruce D."/>
            <person name="Detter C."/>
            <person name="Munk C."/>
            <person name="Smith L.A."/>
            <person name="Smith T.J."/>
            <person name="Sutton G."/>
            <person name="Brettin T.S."/>
        </authorList>
    </citation>
    <scope>NUCLEOTIDE SEQUENCE [LARGE SCALE GENOMIC DNA]</scope>
    <source>
        <strain>Eklund 17B / Type B</strain>
    </source>
</reference>
<protein>
    <recommendedName>
        <fullName evidence="1">Probable transcriptional regulatory protein CLL_A1008</fullName>
    </recommendedName>
</protein>
<comment type="subcellular location">
    <subcellularLocation>
        <location evidence="1">Cytoplasm</location>
    </subcellularLocation>
</comment>
<comment type="similarity">
    <text evidence="1">Belongs to the TACO1 family.</text>
</comment>
<evidence type="ECO:0000255" key="1">
    <source>
        <dbReference type="HAMAP-Rule" id="MF_00693"/>
    </source>
</evidence>
<sequence length="246" mass="27046">MSGHSKWHNIQAKKGKTDAKRGKIFTKIGKELMVAVKNGGPSPETNNRLRDIIAKAKAANMPNDTITRSIKKASGELGSVNYENIIYEGYGPSGVAVIVETLTDNKNRSAGNVRSAFTKGGGNMGTQGCVGFMFQEKGEMVIEKADKDEDEMMMLALDAGAEDFNADEDEVFVVTTTPEDFGTVREALEAEGIEFLEADVKMIPDTYTAIDEADAKKFQKMLDLLEDDEDVQEVYHNAEFPEGWEE</sequence>
<name>Y1008_CLOBB</name>
<proteinExistence type="inferred from homology"/>
<organism>
    <name type="scientific">Clostridium botulinum (strain Eklund 17B / Type B)</name>
    <dbReference type="NCBI Taxonomy" id="935198"/>
    <lineage>
        <taxon>Bacteria</taxon>
        <taxon>Bacillati</taxon>
        <taxon>Bacillota</taxon>
        <taxon>Clostridia</taxon>
        <taxon>Eubacteriales</taxon>
        <taxon>Clostridiaceae</taxon>
        <taxon>Clostridium</taxon>
    </lineage>
</organism>
<accession>B2TML4</accession>
<keyword id="KW-0963">Cytoplasm</keyword>
<keyword id="KW-0238">DNA-binding</keyword>
<keyword id="KW-0804">Transcription</keyword>
<keyword id="KW-0805">Transcription regulation</keyword>
<feature type="chain" id="PRO_1000132175" description="Probable transcriptional regulatory protein CLL_A1008">
    <location>
        <begin position="1"/>
        <end position="246"/>
    </location>
</feature>